<gene>
    <name type="primary">ptges2</name>
    <name type="synonym">pges2</name>
    <name type="synonym">ptgesl</name>
</gene>
<keyword id="KW-0275">Fatty acid biosynthesis</keyword>
<keyword id="KW-0276">Fatty acid metabolism</keyword>
<keyword id="KW-0333">Golgi apparatus</keyword>
<keyword id="KW-0413">Isomerase</keyword>
<keyword id="KW-0444">Lipid biosynthesis</keyword>
<keyword id="KW-0443">Lipid metabolism</keyword>
<keyword id="KW-0472">Membrane</keyword>
<keyword id="KW-0643">Prostaglandin biosynthesis</keyword>
<keyword id="KW-0644">Prostaglandin metabolism</keyword>
<keyword id="KW-1185">Reference proteome</keyword>
<keyword id="KW-0812">Transmembrane</keyword>
<keyword id="KW-1133">Transmembrane helix</keyword>
<dbReference type="EC" id="5.3.99.3" evidence="1"/>
<dbReference type="EMBL" id="BC049325">
    <property type="protein sequence ID" value="AAH49325.1"/>
    <property type="molecule type" value="mRNA"/>
</dbReference>
<dbReference type="RefSeq" id="NP_956574.1">
    <property type="nucleotide sequence ID" value="NM_200280.1"/>
</dbReference>
<dbReference type="SMR" id="Q7ZUC7"/>
<dbReference type="FunCoup" id="Q7ZUC7">
    <property type="interactions" value="2029"/>
</dbReference>
<dbReference type="STRING" id="7955.ENSDARP00000111602"/>
<dbReference type="PaxDb" id="7955-ENSDARP00000111602"/>
<dbReference type="PeptideAtlas" id="Q7ZUC7"/>
<dbReference type="GeneID" id="799964"/>
<dbReference type="KEGG" id="dre:799964"/>
<dbReference type="AGR" id="ZFIN:ZDB-GENE-040426-1063"/>
<dbReference type="CTD" id="799964"/>
<dbReference type="ZFIN" id="ZDB-GENE-040426-1063">
    <property type="gene designation" value="ptgesl"/>
</dbReference>
<dbReference type="eggNOG" id="KOG3029">
    <property type="taxonomic scope" value="Eukaryota"/>
</dbReference>
<dbReference type="InParanoid" id="Q7ZUC7"/>
<dbReference type="OrthoDB" id="423541at2759"/>
<dbReference type="Reactome" id="R-DRE-2162123">
    <property type="pathway name" value="Synthesis of Prostaglandins (PG) and Thromboxanes (TX)"/>
</dbReference>
<dbReference type="Reactome" id="R-DRE-6798695">
    <property type="pathway name" value="Neutrophil degranulation"/>
</dbReference>
<dbReference type="UniPathway" id="UPA00662"/>
<dbReference type="PRO" id="PR:Q7ZUC7"/>
<dbReference type="Proteomes" id="UP000000437">
    <property type="component" value="Alternate scaffold 8"/>
</dbReference>
<dbReference type="Proteomes" id="UP000000437">
    <property type="component" value="Chromosome 8"/>
</dbReference>
<dbReference type="GO" id="GO:0000139">
    <property type="term" value="C:Golgi membrane"/>
    <property type="evidence" value="ECO:0000250"/>
    <property type="project" value="UniProtKB"/>
</dbReference>
<dbReference type="GO" id="GO:0005739">
    <property type="term" value="C:mitochondrion"/>
    <property type="evidence" value="ECO:0000318"/>
    <property type="project" value="GO_Central"/>
</dbReference>
<dbReference type="GO" id="GO:0036134">
    <property type="term" value="F:12-hydroxyheptadecatrienoic acid synthase activity"/>
    <property type="evidence" value="ECO:0007669"/>
    <property type="project" value="RHEA"/>
</dbReference>
<dbReference type="GO" id="GO:0043295">
    <property type="term" value="F:glutathione binding"/>
    <property type="evidence" value="ECO:0000250"/>
    <property type="project" value="UniProtKB"/>
</dbReference>
<dbReference type="GO" id="GO:0020037">
    <property type="term" value="F:heme binding"/>
    <property type="evidence" value="ECO:0000250"/>
    <property type="project" value="UniProtKB"/>
</dbReference>
<dbReference type="GO" id="GO:0016829">
    <property type="term" value="F:lyase activity"/>
    <property type="evidence" value="ECO:0000250"/>
    <property type="project" value="UniProtKB"/>
</dbReference>
<dbReference type="GO" id="GO:0050220">
    <property type="term" value="F:prostaglandin-E synthase activity"/>
    <property type="evidence" value="ECO:0000318"/>
    <property type="project" value="GO_Central"/>
</dbReference>
<dbReference type="GO" id="GO:0001516">
    <property type="term" value="P:prostaglandin biosynthetic process"/>
    <property type="evidence" value="ECO:0007669"/>
    <property type="project" value="UniProtKB-UniPathway"/>
</dbReference>
<dbReference type="CDD" id="cd03197">
    <property type="entry name" value="GST_C_mPGES2"/>
    <property type="match status" value="1"/>
</dbReference>
<dbReference type="CDD" id="cd03040">
    <property type="entry name" value="GST_N_mPGES2"/>
    <property type="match status" value="1"/>
</dbReference>
<dbReference type="FunFam" id="1.20.1050.10:FF:000028">
    <property type="entry name" value="Prostaglandin E synthase 2"/>
    <property type="match status" value="1"/>
</dbReference>
<dbReference type="FunFam" id="3.40.30.10:FF:000114">
    <property type="entry name" value="Prostaglandin E synthase 2"/>
    <property type="match status" value="1"/>
</dbReference>
<dbReference type="Gene3D" id="1.20.1050.10">
    <property type="match status" value="1"/>
</dbReference>
<dbReference type="Gene3D" id="6.20.200.30">
    <property type="match status" value="1"/>
</dbReference>
<dbReference type="Gene3D" id="3.40.30.10">
    <property type="entry name" value="Glutaredoxin"/>
    <property type="match status" value="1"/>
</dbReference>
<dbReference type="InterPro" id="IPR011767">
    <property type="entry name" value="GLR_AS"/>
</dbReference>
<dbReference type="InterPro" id="IPR010987">
    <property type="entry name" value="Glutathione-S-Trfase_C-like"/>
</dbReference>
<dbReference type="InterPro" id="IPR036282">
    <property type="entry name" value="Glutathione-S-Trfase_C_sf"/>
</dbReference>
<dbReference type="InterPro" id="IPR004045">
    <property type="entry name" value="Glutathione_S-Trfase_N"/>
</dbReference>
<dbReference type="InterPro" id="IPR004046">
    <property type="entry name" value="GST_C"/>
</dbReference>
<dbReference type="InterPro" id="IPR034334">
    <property type="entry name" value="PGES2"/>
</dbReference>
<dbReference type="InterPro" id="IPR034335">
    <property type="entry name" value="PGES2_C"/>
</dbReference>
<dbReference type="InterPro" id="IPR036249">
    <property type="entry name" value="Thioredoxin-like_sf"/>
</dbReference>
<dbReference type="PANTHER" id="PTHR12782">
    <property type="entry name" value="MICROSOMAL PROSTAGLANDIN E SYNTHASE-2"/>
    <property type="match status" value="1"/>
</dbReference>
<dbReference type="PANTHER" id="PTHR12782:SF5">
    <property type="entry name" value="PROSTAGLANDIN E SYNTHASE 2"/>
    <property type="match status" value="1"/>
</dbReference>
<dbReference type="Pfam" id="PF00043">
    <property type="entry name" value="GST_C"/>
    <property type="match status" value="1"/>
</dbReference>
<dbReference type="Pfam" id="PF13417">
    <property type="entry name" value="GST_N_3"/>
    <property type="match status" value="1"/>
</dbReference>
<dbReference type="SFLD" id="SFLDG01182">
    <property type="entry name" value="Prostaglandin_E_synthase_like"/>
    <property type="match status" value="1"/>
</dbReference>
<dbReference type="SFLD" id="SFLDG01203">
    <property type="entry name" value="Prostaglandin_E_synthase_like1"/>
    <property type="match status" value="1"/>
</dbReference>
<dbReference type="SUPFAM" id="SSF47616">
    <property type="entry name" value="GST C-terminal domain-like"/>
    <property type="match status" value="1"/>
</dbReference>
<dbReference type="SUPFAM" id="SSF52833">
    <property type="entry name" value="Thioredoxin-like"/>
    <property type="match status" value="1"/>
</dbReference>
<dbReference type="PROSITE" id="PS00195">
    <property type="entry name" value="GLUTAREDOXIN_1"/>
    <property type="match status" value="1"/>
</dbReference>
<dbReference type="PROSITE" id="PS51354">
    <property type="entry name" value="GLUTAREDOXIN_2"/>
    <property type="match status" value="1"/>
</dbReference>
<dbReference type="PROSITE" id="PS50405">
    <property type="entry name" value="GST_CTER"/>
    <property type="match status" value="1"/>
</dbReference>
<comment type="function">
    <text evidence="2 3">Isomerase that catalyzes the conversion of PGH2 into the more stable prostaglandin E2 (PGE2) (in vitro). The biological function and the GSH-dependent property of PTGES2 is still under debate (By similarity). In vivo, PTGES2 could form a complex with GSH and heme and would not participate in PGE2 synthesis but would catalyze the degradation of prostaglandin E2 H2 (PGH2) to 12(S)-hydroxy-5(Z),8(E),10(E)-heptadecatrienoic acid (HHT) and malondialdehyde (MDA) (By similarity).</text>
</comment>
<comment type="catalytic activity">
    <reaction evidence="1">
        <text>prostaglandin H2 = prostaglandin E2</text>
        <dbReference type="Rhea" id="RHEA:12893"/>
        <dbReference type="ChEBI" id="CHEBI:57405"/>
        <dbReference type="ChEBI" id="CHEBI:606564"/>
        <dbReference type="EC" id="5.3.99.3"/>
    </reaction>
    <physiologicalReaction direction="left-to-right" evidence="1">
        <dbReference type="Rhea" id="RHEA:12894"/>
    </physiologicalReaction>
</comment>
<comment type="catalytic activity">
    <reaction evidence="1">
        <text>prostaglandin H2 = (12S)-hydroxy-(5Z,8E,10E)-heptadecatrienoate + malonaldehyde</text>
        <dbReference type="Rhea" id="RHEA:48644"/>
        <dbReference type="ChEBI" id="CHEBI:57405"/>
        <dbReference type="ChEBI" id="CHEBI:90694"/>
        <dbReference type="ChEBI" id="CHEBI:566274"/>
    </reaction>
    <physiologicalReaction direction="left-to-right" evidence="1">
        <dbReference type="Rhea" id="RHEA:48645"/>
    </physiologicalReaction>
</comment>
<comment type="activity regulation">
    <text evidence="1">Isomerase activity is increased by sulfhydril compounds. Dithiothreitol (DTT) is most effective, followed by glutathione (GSH) and 2-mercaptoethanol.</text>
</comment>
<comment type="pathway">
    <text evidence="1">Lipid metabolism; prostaglandin biosynthesis.</text>
</comment>
<comment type="subunit">
    <text evidence="1">Homodimer.</text>
</comment>
<comment type="subcellular location">
    <subcellularLocation>
        <location evidence="2">Golgi apparatus membrane</location>
        <topology evidence="2">Single-pass membrane protein</topology>
    </subcellularLocation>
</comment>
<comment type="similarity">
    <text evidence="5">Belongs to the GST superfamily.</text>
</comment>
<sequence>MAAACTRTLGKVGRLVLDTPTCRFTNTAAFVPRTSMRCQGRAYGTGSSGFKSRLLLAAPVRGSGRVLGCAFLLGGGFGLYQTIKLTLQHHLAEKESDASDLDTDLKLTLYQYKTCPFCSKVRAFLDYHRLPYEIVEVNPVMRQEIKWSTYRKVPILMVNGTVQLNDSSVIISALKTYISSKDKKISEILACYPEMKSKNDRGKDVIEFGNKYWVMVHDADADQLYPGKDSRKEEIKWRTWADDWLVHLISPNVYRTPTEALASFDYIVREGKFGSFEGFFAKYFGAAAMWIISKRLKYKHNLQADVRQDLYKAVNDWVAAIGKNKQFMGGDEPNLADLAVFGVLRVMEGLQSFDDMMEHTKVKKWYSRMQKATQHVS</sequence>
<protein>
    <recommendedName>
        <fullName>Prostaglandin E synthase 2</fullName>
        <ecNumber evidence="1">5.3.99.3</ecNumber>
    </recommendedName>
    <alternativeName>
        <fullName>Microsomal prostaglandin E synthase 2</fullName>
        <shortName>mPGES-2</shortName>
    </alternativeName>
</protein>
<accession>Q7ZUC7</accession>
<name>PGES2_DANRE</name>
<evidence type="ECO:0000250" key="1">
    <source>
        <dbReference type="UniProtKB" id="Q66LN0"/>
    </source>
</evidence>
<evidence type="ECO:0000250" key="2">
    <source>
        <dbReference type="UniProtKB" id="Q9H7Z7"/>
    </source>
</evidence>
<evidence type="ECO:0000250" key="3">
    <source>
        <dbReference type="UniProtKB" id="Q9N0A4"/>
    </source>
</evidence>
<evidence type="ECO:0000255" key="4"/>
<evidence type="ECO:0000305" key="5"/>
<reference key="1">
    <citation type="submission" date="2003-03" db="EMBL/GenBank/DDBJ databases">
        <authorList>
            <consortium name="NIH - Zebrafish Gene Collection (ZGC) project"/>
        </authorList>
    </citation>
    <scope>NUCLEOTIDE SEQUENCE [LARGE SCALE MRNA]</scope>
</reference>
<proteinExistence type="evidence at transcript level"/>
<organism>
    <name type="scientific">Danio rerio</name>
    <name type="common">Zebrafish</name>
    <name type="synonym">Brachydanio rerio</name>
    <dbReference type="NCBI Taxonomy" id="7955"/>
    <lineage>
        <taxon>Eukaryota</taxon>
        <taxon>Metazoa</taxon>
        <taxon>Chordata</taxon>
        <taxon>Craniata</taxon>
        <taxon>Vertebrata</taxon>
        <taxon>Euteleostomi</taxon>
        <taxon>Actinopterygii</taxon>
        <taxon>Neopterygii</taxon>
        <taxon>Teleostei</taxon>
        <taxon>Ostariophysi</taxon>
        <taxon>Cypriniformes</taxon>
        <taxon>Danionidae</taxon>
        <taxon>Danioninae</taxon>
        <taxon>Danio</taxon>
    </lineage>
</organism>
<feature type="chain" id="PRO_0000186045" description="Prostaglandin E synthase 2">
    <location>
        <begin position="1"/>
        <end position="377"/>
    </location>
</feature>
<feature type="topological domain" description="Lumenal" evidence="4">
    <location>
        <begin position="1"/>
        <end position="65"/>
    </location>
</feature>
<feature type="transmembrane region" description="Helical" evidence="4">
    <location>
        <begin position="66"/>
        <end position="83"/>
    </location>
</feature>
<feature type="domain" description="GST N-terminal">
    <location>
        <begin position="105"/>
        <end position="182"/>
    </location>
</feature>
<feature type="domain" description="GST C-terminal">
    <location>
        <begin position="266"/>
        <end position="377"/>
    </location>
</feature>
<feature type="binding site" evidence="3">
    <location>
        <position position="153"/>
    </location>
    <ligand>
        <name>glutathione</name>
        <dbReference type="ChEBI" id="CHEBI:57925"/>
    </ligand>
</feature>
<feature type="binding site" evidence="3">
    <location>
        <begin position="166"/>
        <end position="167"/>
    </location>
    <ligand>
        <name>glutathione</name>
        <dbReference type="ChEBI" id="CHEBI:57925"/>
    </ligand>
</feature>